<evidence type="ECO:0000255" key="1">
    <source>
        <dbReference type="HAMAP-Rule" id="MF_00199"/>
    </source>
</evidence>
<reference key="1">
    <citation type="journal article" date="2010" name="PLoS ONE">
        <title>Genome sequence of Cronobacter sakazakii BAA-894 and comparative genomic hybridization analysis with other Cronobacter species.</title>
        <authorList>
            <person name="Kucerova E."/>
            <person name="Clifton S.W."/>
            <person name="Xia X.Q."/>
            <person name="Long F."/>
            <person name="Porwollik S."/>
            <person name="Fulton L."/>
            <person name="Fronick C."/>
            <person name="Minx P."/>
            <person name="Kyung K."/>
            <person name="Warren W."/>
            <person name="Fulton R."/>
            <person name="Feng D."/>
            <person name="Wollam A."/>
            <person name="Shah N."/>
            <person name="Bhonagiri V."/>
            <person name="Nash W.E."/>
            <person name="Hallsworth-Pepin K."/>
            <person name="Wilson R.K."/>
            <person name="McClelland M."/>
            <person name="Forsythe S.J."/>
        </authorList>
    </citation>
    <scope>NUCLEOTIDE SEQUENCE [LARGE SCALE GENOMIC DNA]</scope>
    <source>
        <strain>ATCC BAA-894</strain>
    </source>
</reference>
<dbReference type="EC" id="3.6.1.41" evidence="1"/>
<dbReference type="EMBL" id="CP000783">
    <property type="protein sequence ID" value="ABU78510.1"/>
    <property type="molecule type" value="Genomic_DNA"/>
</dbReference>
<dbReference type="RefSeq" id="WP_012125786.1">
    <property type="nucleotide sequence ID" value="NC_009778.1"/>
</dbReference>
<dbReference type="SMR" id="A7MIB2"/>
<dbReference type="KEGG" id="esa:ESA_03289"/>
<dbReference type="PATRIC" id="fig|290339.8.peg.2918"/>
<dbReference type="HOGENOM" id="CLU_056184_2_0_6"/>
<dbReference type="Proteomes" id="UP000000260">
    <property type="component" value="Chromosome"/>
</dbReference>
<dbReference type="GO" id="GO:0008803">
    <property type="term" value="F:bis(5'-nucleosyl)-tetraphosphatase (symmetrical) activity"/>
    <property type="evidence" value="ECO:0007669"/>
    <property type="project" value="UniProtKB-UniRule"/>
</dbReference>
<dbReference type="CDD" id="cd07422">
    <property type="entry name" value="MPP_ApaH"/>
    <property type="match status" value="1"/>
</dbReference>
<dbReference type="FunFam" id="3.60.21.10:FF:000013">
    <property type="entry name" value="Bis(5'-nucleosyl)-tetraphosphatase, symmetrical"/>
    <property type="match status" value="1"/>
</dbReference>
<dbReference type="Gene3D" id="3.60.21.10">
    <property type="match status" value="1"/>
</dbReference>
<dbReference type="HAMAP" id="MF_00199">
    <property type="entry name" value="ApaH"/>
    <property type="match status" value="1"/>
</dbReference>
<dbReference type="InterPro" id="IPR004617">
    <property type="entry name" value="ApaH"/>
</dbReference>
<dbReference type="InterPro" id="IPR004843">
    <property type="entry name" value="Calcineurin-like_PHP_ApaH"/>
</dbReference>
<dbReference type="InterPro" id="IPR029052">
    <property type="entry name" value="Metallo-depent_PP-like"/>
</dbReference>
<dbReference type="NCBIfam" id="TIGR00668">
    <property type="entry name" value="apaH"/>
    <property type="match status" value="1"/>
</dbReference>
<dbReference type="NCBIfam" id="NF001204">
    <property type="entry name" value="PRK00166.1"/>
    <property type="match status" value="1"/>
</dbReference>
<dbReference type="PANTHER" id="PTHR40942">
    <property type="match status" value="1"/>
</dbReference>
<dbReference type="PANTHER" id="PTHR40942:SF4">
    <property type="entry name" value="CYTOCHROME C5"/>
    <property type="match status" value="1"/>
</dbReference>
<dbReference type="Pfam" id="PF00149">
    <property type="entry name" value="Metallophos"/>
    <property type="match status" value="1"/>
</dbReference>
<dbReference type="PIRSF" id="PIRSF000903">
    <property type="entry name" value="B5n-ttraPtase_sm"/>
    <property type="match status" value="1"/>
</dbReference>
<dbReference type="SUPFAM" id="SSF56300">
    <property type="entry name" value="Metallo-dependent phosphatases"/>
    <property type="match status" value="1"/>
</dbReference>
<gene>
    <name evidence="1" type="primary">apaH</name>
    <name type="ordered locus">ESA_03289</name>
</gene>
<name>APAH_CROS8</name>
<accession>A7MIB2</accession>
<feature type="chain" id="PRO_1000012060" description="Bis(5'-nucleosyl)-tetraphosphatase, symmetrical">
    <location>
        <begin position="1"/>
        <end position="283"/>
    </location>
</feature>
<keyword id="KW-0378">Hydrolase</keyword>
<keyword id="KW-1185">Reference proteome</keyword>
<protein>
    <recommendedName>
        <fullName evidence="1">Bis(5'-nucleosyl)-tetraphosphatase, symmetrical</fullName>
        <ecNumber evidence="1">3.6.1.41</ecNumber>
    </recommendedName>
    <alternativeName>
        <fullName evidence="1">Ap4A hydrolase</fullName>
    </alternativeName>
    <alternativeName>
        <fullName evidence="1">Diadenosine 5',5'''-P1,P4-tetraphosphate pyrophosphohydrolase</fullName>
    </alternativeName>
    <alternativeName>
        <fullName evidence="1">Diadenosine tetraphosphatase</fullName>
    </alternativeName>
</protein>
<organism>
    <name type="scientific">Cronobacter sakazakii (strain ATCC BAA-894)</name>
    <name type="common">Enterobacter sakazakii</name>
    <dbReference type="NCBI Taxonomy" id="290339"/>
    <lineage>
        <taxon>Bacteria</taxon>
        <taxon>Pseudomonadati</taxon>
        <taxon>Pseudomonadota</taxon>
        <taxon>Gammaproteobacteria</taxon>
        <taxon>Enterobacterales</taxon>
        <taxon>Enterobacteriaceae</taxon>
        <taxon>Cronobacter</taxon>
    </lineage>
</organism>
<comment type="function">
    <text evidence="1">Hydrolyzes diadenosine 5',5'''-P1,P4-tetraphosphate to yield ADP.</text>
</comment>
<comment type="catalytic activity">
    <reaction evidence="1">
        <text>P(1),P(4)-bis(5'-adenosyl) tetraphosphate + H2O = 2 ADP + 2 H(+)</text>
        <dbReference type="Rhea" id="RHEA:24252"/>
        <dbReference type="ChEBI" id="CHEBI:15377"/>
        <dbReference type="ChEBI" id="CHEBI:15378"/>
        <dbReference type="ChEBI" id="CHEBI:58141"/>
        <dbReference type="ChEBI" id="CHEBI:456216"/>
        <dbReference type="EC" id="3.6.1.41"/>
    </reaction>
</comment>
<comment type="similarity">
    <text evidence="1">Belongs to the Ap4A hydrolase family.</text>
</comment>
<sequence length="283" mass="31401">MSTYLIGDVHGCYDELVALLQQVEFTPGQDTLWLTGDLVARGPGSLEVLRYVRSLGDSVRMVLGNHDLHLLAVFAGISRNKPKDRVTPLLEAPDADELINWLRRQPLLQVDEDKKLVMAHAGITPQWDLPTAQACARDVEAVLASDSYPLFLDAMYGDMPNNWSPELTGLARLRFISNAFTRMRYCFPNGQLDMYCKESPESAPAPLKPWFAIPGPVAQEYAIVFGHWASLEGKGTPENIYALDTGCCWGGTLTCLRWEDKAVFTQHSNRQADSDDDKAAIAS</sequence>
<proteinExistence type="inferred from homology"/>